<comment type="function">
    <text evidence="1">Tetrapolymerization of the monopyrrole PBG into the hydroxymethylbilane pre-uroporphyrinogen in several discrete steps.</text>
</comment>
<comment type="catalytic activity">
    <reaction>
        <text>4 porphobilinogen + H2O = hydroxymethylbilane + 4 NH4(+)</text>
        <dbReference type="Rhea" id="RHEA:13185"/>
        <dbReference type="ChEBI" id="CHEBI:15377"/>
        <dbReference type="ChEBI" id="CHEBI:28938"/>
        <dbReference type="ChEBI" id="CHEBI:57845"/>
        <dbReference type="ChEBI" id="CHEBI:58126"/>
        <dbReference type="EC" id="2.5.1.61"/>
    </reaction>
</comment>
<comment type="cofactor">
    <cofactor>
        <name>dipyrromethane</name>
        <dbReference type="ChEBI" id="CHEBI:60342"/>
    </cofactor>
    <text>Binds 1 dipyrromethane group covalently.</text>
</comment>
<comment type="pathway">
    <text>Porphyrin-containing compound metabolism; protoporphyrin-IX biosynthesis; coproporphyrinogen-III from 5-aminolevulinate: step 2/4.</text>
</comment>
<comment type="subunit">
    <text evidence="1">Monomer.</text>
</comment>
<comment type="miscellaneous">
    <text evidence="1">The porphobilinogen subunits are added to the dipyrromethane group.</text>
</comment>
<comment type="similarity">
    <text evidence="2">Belongs to the HMBS family.</text>
</comment>
<dbReference type="EC" id="2.5.1.61"/>
<dbReference type="EMBL" id="M74844">
    <property type="protein sequence ID" value="AAA18907.1"/>
    <property type="molecule type" value="Genomic_DNA"/>
</dbReference>
<dbReference type="EMBL" id="AE004091">
    <property type="protein sequence ID" value="AAG08645.1"/>
    <property type="molecule type" value="Genomic_DNA"/>
</dbReference>
<dbReference type="PIR" id="B82989">
    <property type="entry name" value="B82989"/>
</dbReference>
<dbReference type="PIR" id="S41586">
    <property type="entry name" value="S41586"/>
</dbReference>
<dbReference type="RefSeq" id="NP_253947.1">
    <property type="nucleotide sequence ID" value="NC_002516.2"/>
</dbReference>
<dbReference type="RefSeq" id="WP_003114031.1">
    <property type="nucleotide sequence ID" value="NZ_QZGE01000002.1"/>
</dbReference>
<dbReference type="SMR" id="Q60169"/>
<dbReference type="FunCoup" id="Q60169">
    <property type="interactions" value="702"/>
</dbReference>
<dbReference type="STRING" id="208964.PA5260"/>
<dbReference type="PaxDb" id="208964-PA5260"/>
<dbReference type="DNASU" id="877673"/>
<dbReference type="GeneID" id="877673"/>
<dbReference type="KEGG" id="pae:PA5260"/>
<dbReference type="PATRIC" id="fig|208964.12.peg.5513"/>
<dbReference type="PseudoCAP" id="PA5260"/>
<dbReference type="HOGENOM" id="CLU_019704_0_2_6"/>
<dbReference type="InParanoid" id="Q60169"/>
<dbReference type="OrthoDB" id="9810298at2"/>
<dbReference type="PhylomeDB" id="Q60169"/>
<dbReference type="BioCyc" id="PAER208964:G1FZ6-5381-MONOMER"/>
<dbReference type="UniPathway" id="UPA00251">
    <property type="reaction ID" value="UER00319"/>
</dbReference>
<dbReference type="Proteomes" id="UP000002438">
    <property type="component" value="Chromosome"/>
</dbReference>
<dbReference type="GO" id="GO:0005737">
    <property type="term" value="C:cytoplasm"/>
    <property type="evidence" value="ECO:0000318"/>
    <property type="project" value="GO_Central"/>
</dbReference>
<dbReference type="GO" id="GO:0004418">
    <property type="term" value="F:hydroxymethylbilane synthase activity"/>
    <property type="evidence" value="ECO:0000318"/>
    <property type="project" value="GO_Central"/>
</dbReference>
<dbReference type="GO" id="GO:0006783">
    <property type="term" value="P:heme biosynthetic process"/>
    <property type="evidence" value="ECO:0000318"/>
    <property type="project" value="GO_Central"/>
</dbReference>
<dbReference type="GO" id="GO:0006782">
    <property type="term" value="P:protoporphyrinogen IX biosynthetic process"/>
    <property type="evidence" value="ECO:0007669"/>
    <property type="project" value="UniProtKB-UniRule"/>
</dbReference>
<dbReference type="CDD" id="cd13646">
    <property type="entry name" value="PBP2_EcHMBS_like"/>
    <property type="match status" value="1"/>
</dbReference>
<dbReference type="FunFam" id="3.30.160.40:FF:000002">
    <property type="entry name" value="Porphobilinogen deaminase"/>
    <property type="match status" value="1"/>
</dbReference>
<dbReference type="FunFam" id="3.40.190.10:FF:000004">
    <property type="entry name" value="Porphobilinogen deaminase"/>
    <property type="match status" value="1"/>
</dbReference>
<dbReference type="FunFam" id="3.40.190.10:FF:000005">
    <property type="entry name" value="Porphobilinogen deaminase"/>
    <property type="match status" value="1"/>
</dbReference>
<dbReference type="Gene3D" id="3.40.190.10">
    <property type="entry name" value="Periplasmic binding protein-like II"/>
    <property type="match status" value="2"/>
</dbReference>
<dbReference type="Gene3D" id="3.30.160.40">
    <property type="entry name" value="Porphobilinogen deaminase, C-terminal domain"/>
    <property type="match status" value="1"/>
</dbReference>
<dbReference type="HAMAP" id="MF_00260">
    <property type="entry name" value="Porphobil_deam"/>
    <property type="match status" value="1"/>
</dbReference>
<dbReference type="InterPro" id="IPR000860">
    <property type="entry name" value="HemC"/>
</dbReference>
<dbReference type="InterPro" id="IPR022419">
    <property type="entry name" value="Porphobilin_deaminase_cofac_BS"/>
</dbReference>
<dbReference type="InterPro" id="IPR022417">
    <property type="entry name" value="Porphobilin_deaminase_N"/>
</dbReference>
<dbReference type="InterPro" id="IPR022418">
    <property type="entry name" value="Porphobilinogen_deaminase_C"/>
</dbReference>
<dbReference type="InterPro" id="IPR036803">
    <property type="entry name" value="Porphobilinogen_deaminase_C_sf"/>
</dbReference>
<dbReference type="NCBIfam" id="TIGR00212">
    <property type="entry name" value="hemC"/>
    <property type="match status" value="1"/>
</dbReference>
<dbReference type="PANTHER" id="PTHR11557">
    <property type="entry name" value="PORPHOBILINOGEN DEAMINASE"/>
    <property type="match status" value="1"/>
</dbReference>
<dbReference type="PANTHER" id="PTHR11557:SF0">
    <property type="entry name" value="PORPHOBILINOGEN DEAMINASE"/>
    <property type="match status" value="1"/>
</dbReference>
<dbReference type="Pfam" id="PF01379">
    <property type="entry name" value="Porphobil_deam"/>
    <property type="match status" value="1"/>
</dbReference>
<dbReference type="Pfam" id="PF03900">
    <property type="entry name" value="Porphobil_deamC"/>
    <property type="match status" value="1"/>
</dbReference>
<dbReference type="PIRSF" id="PIRSF001438">
    <property type="entry name" value="4pyrrol_synth_OHMeBilane_synth"/>
    <property type="match status" value="1"/>
</dbReference>
<dbReference type="PRINTS" id="PR00151">
    <property type="entry name" value="PORPHBDMNASE"/>
</dbReference>
<dbReference type="SUPFAM" id="SSF53850">
    <property type="entry name" value="Periplasmic binding protein-like II"/>
    <property type="match status" value="1"/>
</dbReference>
<dbReference type="SUPFAM" id="SSF54782">
    <property type="entry name" value="Porphobilinogen deaminase (hydroxymethylbilane synthase), C-terminal domain"/>
    <property type="match status" value="1"/>
</dbReference>
<dbReference type="PROSITE" id="PS00533">
    <property type="entry name" value="PORPHOBILINOGEN_DEAM"/>
    <property type="match status" value="1"/>
</dbReference>
<sequence>MSSREIRIATRQSALALWQAEYVKARLEQAHPGLTVTLLPMTSRGDKLLDAPLAKIGGKGLFVKELETALLEGAADIAVHSMKDVPMDFPEGLGLYTICEREDPRDAFVSNTYASLEQLPAGSVVGTSSLRRQAQLLARRPDLQIRFLRGNVNTRLAKLDAGEYDAIILAAAGLIRLGFESRIRSSISVDDSLPAGGQGAVGIECRTADSDLHALLEPLHHTDTALRVTAERALNKRLNGGCQVPIACYAIREGDQLWLRGLVGQPDGTQLLRAEGRAPLAEAEALGVRVAEDLLEQGAEAILEAVYGEAGHP</sequence>
<evidence type="ECO:0000250" key="1"/>
<evidence type="ECO:0000305" key="2"/>
<proteinExistence type="inferred from homology"/>
<reference key="1">
    <citation type="journal article" date="1994" name="Mol. Gen. Genet.">
        <title>The Pseudomonas aeruginosa homologs of hemC and hemD are linked to the gene encoding the regulator of mucoidy AlgR.</title>
        <authorList>
            <person name="Mohr C.D."/>
            <person name="Sonsteby S.K."/>
            <person name="Deretic V."/>
        </authorList>
    </citation>
    <scope>NUCLEOTIDE SEQUENCE [GENOMIC DNA]</scope>
</reference>
<reference key="2">
    <citation type="journal article" date="2000" name="Nature">
        <title>Complete genome sequence of Pseudomonas aeruginosa PAO1, an opportunistic pathogen.</title>
        <authorList>
            <person name="Stover C.K."/>
            <person name="Pham X.-Q.T."/>
            <person name="Erwin A.L."/>
            <person name="Mizoguchi S.D."/>
            <person name="Warrener P."/>
            <person name="Hickey M.J."/>
            <person name="Brinkman F.S.L."/>
            <person name="Hufnagle W.O."/>
            <person name="Kowalik D.J."/>
            <person name="Lagrou M."/>
            <person name="Garber R.L."/>
            <person name="Goltry L."/>
            <person name="Tolentino E."/>
            <person name="Westbrock-Wadman S."/>
            <person name="Yuan Y."/>
            <person name="Brody L.L."/>
            <person name="Coulter S.N."/>
            <person name="Folger K.R."/>
            <person name="Kas A."/>
            <person name="Larbig K."/>
            <person name="Lim R.M."/>
            <person name="Smith K.A."/>
            <person name="Spencer D.H."/>
            <person name="Wong G.K.-S."/>
            <person name="Wu Z."/>
            <person name="Paulsen I.T."/>
            <person name="Reizer J."/>
            <person name="Saier M.H. Jr."/>
            <person name="Hancock R.E.W."/>
            <person name="Lory S."/>
            <person name="Olson M.V."/>
        </authorList>
    </citation>
    <scope>NUCLEOTIDE SEQUENCE [LARGE SCALE GENOMIC DNA]</scope>
    <source>
        <strain>ATCC 15692 / DSM 22644 / CIP 104116 / JCM 14847 / LMG 12228 / 1C / PRS 101 / PAO1</strain>
    </source>
</reference>
<protein>
    <recommendedName>
        <fullName>Porphobilinogen deaminase</fullName>
        <shortName>PBG</shortName>
        <ecNumber>2.5.1.61</ecNumber>
    </recommendedName>
    <alternativeName>
        <fullName>Hydroxymethylbilane synthase</fullName>
        <shortName>HMBS</shortName>
    </alternativeName>
    <alternativeName>
        <fullName>Pre-uroporphyrinogen synthase</fullName>
    </alternativeName>
</protein>
<organism>
    <name type="scientific">Pseudomonas aeruginosa (strain ATCC 15692 / DSM 22644 / CIP 104116 / JCM 14847 / LMG 12228 / 1C / PRS 101 / PAO1)</name>
    <dbReference type="NCBI Taxonomy" id="208964"/>
    <lineage>
        <taxon>Bacteria</taxon>
        <taxon>Pseudomonadati</taxon>
        <taxon>Pseudomonadota</taxon>
        <taxon>Gammaproteobacteria</taxon>
        <taxon>Pseudomonadales</taxon>
        <taxon>Pseudomonadaceae</taxon>
        <taxon>Pseudomonas</taxon>
    </lineage>
</organism>
<feature type="chain" id="PRO_0000142974" description="Porphobilinogen deaminase">
    <location>
        <begin position="1"/>
        <end position="313"/>
    </location>
</feature>
<feature type="modified residue" description="S-(dipyrrolylmethanemethyl)cysteine" evidence="1">
    <location>
        <position position="242"/>
    </location>
</feature>
<feature type="sequence conflict" description="In Ref. 1; AAA18907." evidence="2" ref="1">
    <original>KAR</original>
    <variation>NSTG</variation>
    <location>
        <begin position="24"/>
        <end position="26"/>
    </location>
</feature>
<feature type="sequence conflict" description="In Ref. 1; AAA18907." evidence="2" ref="1">
    <original>SLR</original>
    <variation>RLG</variation>
    <location>
        <begin position="129"/>
        <end position="131"/>
    </location>
</feature>
<feature type="sequence conflict" description="In Ref. 1; AAA18907." evidence="2" ref="1">
    <original>L</original>
    <variation>V</variation>
    <location>
        <position position="174"/>
    </location>
</feature>
<feature type="sequence conflict" description="In Ref. 1; AAA18907." evidence="2" ref="1">
    <original>E</original>
    <variation>D</variation>
    <location>
        <position position="282"/>
    </location>
</feature>
<gene>
    <name type="primary">hemC</name>
    <name type="ordered locus">PA5260</name>
</gene>
<name>HEM3_PSEAE</name>
<keyword id="KW-0627">Porphyrin biosynthesis</keyword>
<keyword id="KW-1185">Reference proteome</keyword>
<keyword id="KW-0808">Transferase</keyword>
<accession>Q60169</accession>